<proteinExistence type="evidence at transcript level"/>
<reference key="1">
    <citation type="journal article" date="2010" name="BMC Genomics">
        <title>Salmo salar and Esox lucius full-length cDNA sequences reveal changes in evolutionary pressures on a post-tetraploidization genome.</title>
        <authorList>
            <person name="Leong J.S."/>
            <person name="Jantzen S.G."/>
            <person name="von Schalburg K.R."/>
            <person name="Cooper G.A."/>
            <person name="Messmer A.M."/>
            <person name="Liao N.Y."/>
            <person name="Munro S."/>
            <person name="Moore R."/>
            <person name="Holt R.A."/>
            <person name="Jones S.J."/>
            <person name="Davidson W.S."/>
            <person name="Koop B.F."/>
        </authorList>
    </citation>
    <scope>NUCLEOTIDE SEQUENCE [LARGE SCALE MRNA]</scope>
    <source>
        <tissue>Brain</tissue>
    </source>
</reference>
<organism>
    <name type="scientific">Salmo salar</name>
    <name type="common">Atlantic salmon</name>
    <dbReference type="NCBI Taxonomy" id="8030"/>
    <lineage>
        <taxon>Eukaryota</taxon>
        <taxon>Metazoa</taxon>
        <taxon>Chordata</taxon>
        <taxon>Craniata</taxon>
        <taxon>Vertebrata</taxon>
        <taxon>Euteleostomi</taxon>
        <taxon>Actinopterygii</taxon>
        <taxon>Neopterygii</taxon>
        <taxon>Teleostei</taxon>
        <taxon>Protacanthopterygii</taxon>
        <taxon>Salmoniformes</taxon>
        <taxon>Salmonidae</taxon>
        <taxon>Salmoninae</taxon>
        <taxon>Salmo</taxon>
    </lineage>
</organism>
<feature type="chain" id="PRO_0000359717" description="Choline transporter-like protein 2">
    <location>
        <begin position="1"/>
        <end position="706"/>
    </location>
</feature>
<feature type="topological domain" description="Cytoplasmic" evidence="3">
    <location>
        <begin position="1"/>
        <end position="32"/>
    </location>
</feature>
<feature type="transmembrane region" description="Helical" evidence="3">
    <location>
        <begin position="33"/>
        <end position="53"/>
    </location>
</feature>
<feature type="topological domain" description="Extracellular" evidence="3">
    <location>
        <begin position="54"/>
        <end position="232"/>
    </location>
</feature>
<feature type="transmembrane region" description="Helical" evidence="3">
    <location>
        <begin position="233"/>
        <end position="253"/>
    </location>
</feature>
<feature type="topological domain" description="Cytoplasmic" evidence="3">
    <location>
        <begin position="254"/>
        <end position="256"/>
    </location>
</feature>
<feature type="transmembrane region" description="Helical" evidence="3">
    <location>
        <begin position="257"/>
        <end position="277"/>
    </location>
</feature>
<feature type="topological domain" description="Extracellular" evidence="3">
    <location>
        <begin position="278"/>
        <end position="315"/>
    </location>
</feature>
<feature type="transmembrane region" description="Helical" evidence="3">
    <location>
        <begin position="316"/>
        <end position="336"/>
    </location>
</feature>
<feature type="topological domain" description="Cytoplasmic" evidence="3">
    <location>
        <begin position="337"/>
        <end position="364"/>
    </location>
</feature>
<feature type="transmembrane region" description="Helical" evidence="3">
    <location>
        <begin position="365"/>
        <end position="385"/>
    </location>
</feature>
<feature type="topological domain" description="Extracellular" evidence="3">
    <location>
        <begin position="386"/>
        <end position="454"/>
    </location>
</feature>
<feature type="transmembrane region" description="Helical" evidence="3">
    <location>
        <begin position="455"/>
        <end position="477"/>
    </location>
</feature>
<feature type="topological domain" description="Cytoplasmic" evidence="3">
    <location>
        <begin position="478"/>
        <end position="504"/>
    </location>
</feature>
<feature type="transmembrane region" description="Helical" evidence="3">
    <location>
        <begin position="505"/>
        <end position="525"/>
    </location>
</feature>
<feature type="topological domain" description="Extracellular" evidence="3">
    <location>
        <begin position="526"/>
        <end position="599"/>
    </location>
</feature>
<feature type="transmembrane region" description="Helical" evidence="3">
    <location>
        <begin position="600"/>
        <end position="620"/>
    </location>
</feature>
<feature type="topological domain" description="Cytoplasmic" evidence="3">
    <location>
        <begin position="621"/>
        <end position="638"/>
    </location>
</feature>
<feature type="transmembrane region" description="Helical" evidence="3">
    <location>
        <begin position="639"/>
        <end position="659"/>
    </location>
</feature>
<feature type="topological domain" description="Extracellular" evidence="3">
    <location>
        <begin position="660"/>
        <end position="706"/>
    </location>
</feature>
<feature type="glycosylation site" description="N-linked (GlcNAc...) asparagine" evidence="3">
    <location>
        <position position="187"/>
    </location>
</feature>
<feature type="glycosylation site" description="N-linked (GlcNAc...) asparagine" evidence="3">
    <location>
        <position position="210"/>
    </location>
</feature>
<feature type="glycosylation site" description="N-linked (GlcNAc...) asparagine" evidence="3">
    <location>
        <position position="293"/>
    </location>
</feature>
<feature type="glycosylation site" description="N-linked (GlcNAc...) asparagine" evidence="3">
    <location>
        <position position="397"/>
    </location>
</feature>
<feature type="glycosylation site" description="N-linked (GlcNAc...) asparagine" evidence="3">
    <location>
        <position position="412"/>
    </location>
</feature>
<name>CTL2_SALSA</name>
<gene>
    <name type="primary">slc44a2</name>
    <name type="synonym">ctl2</name>
</gene>
<accession>B5X3W7</accession>
<protein>
    <recommendedName>
        <fullName>Choline transporter-like protein 2</fullName>
    </recommendedName>
    <alternativeName>
        <fullName>Solute carrier family 44 member 2</fullName>
    </alternativeName>
</protein>
<comment type="function">
    <text evidence="2">Choline/H+ antiporter, mainly in mitochodria. Also acts as a low-affinity ethanolamine/H+ antiporter, regulating the supply of extracellular ethanolamine (Etn) for the CDP-Etn pathway, redistribute intracellular Etn and balance the CDP-Cho and CDP-Etn arms of the Kennedy pathway.</text>
</comment>
<comment type="catalytic activity">
    <reaction evidence="2">
        <text>choline(out) + n H(+)(in) = choline(in) + n H(+)(out)</text>
        <dbReference type="Rhea" id="RHEA:75463"/>
        <dbReference type="ChEBI" id="CHEBI:15354"/>
        <dbReference type="ChEBI" id="CHEBI:15378"/>
    </reaction>
</comment>
<comment type="catalytic activity">
    <reaction evidence="2">
        <text>ethanolamine(out) + n H(+)(in) = ethanolamine(in) + n H(+)(out)</text>
        <dbReference type="Rhea" id="RHEA:75467"/>
        <dbReference type="ChEBI" id="CHEBI:15378"/>
        <dbReference type="ChEBI" id="CHEBI:57603"/>
    </reaction>
</comment>
<comment type="subcellular location">
    <subcellularLocation>
        <location evidence="2">Cell membrane</location>
        <topology evidence="3">Multi-pass membrane protein</topology>
    </subcellularLocation>
    <subcellularLocation>
        <location evidence="2">Mitochondrion outer membrane</location>
        <topology evidence="3">Multi-pass membrane protein</topology>
    </subcellularLocation>
    <text evidence="1">Mainly expressed in mitochondria.</text>
</comment>
<comment type="similarity">
    <text evidence="4">Belongs to the CTL (choline transporter-like) family.</text>
</comment>
<evidence type="ECO:0000250" key="1">
    <source>
        <dbReference type="UniProtKB" id="B4F795"/>
    </source>
</evidence>
<evidence type="ECO:0000250" key="2">
    <source>
        <dbReference type="UniProtKB" id="Q8IWA5"/>
    </source>
</evidence>
<evidence type="ECO:0000255" key="3"/>
<evidence type="ECO:0000305" key="4"/>
<dbReference type="EMBL" id="BT045736">
    <property type="protein sequence ID" value="ACI33998.1"/>
    <property type="molecule type" value="mRNA"/>
</dbReference>
<dbReference type="RefSeq" id="NP_001133839.1">
    <property type="nucleotide sequence ID" value="NM_001140367.1"/>
</dbReference>
<dbReference type="SMR" id="B5X3W7"/>
<dbReference type="STRING" id="8030.ENSSSAP00000065385"/>
<dbReference type="GlyCosmos" id="B5X3W7">
    <property type="glycosylation" value="5 sites, No reported glycans"/>
</dbReference>
<dbReference type="PaxDb" id="8030-ENSSSAP00000065385"/>
<dbReference type="Ensembl" id="ENSSSAT00070065601">
    <property type="protein sequence ID" value="ENSSSAP00070062886"/>
    <property type="gene ID" value="ENSSSAG00070040800"/>
</dbReference>
<dbReference type="GeneID" id="100195338"/>
<dbReference type="KEGG" id="sasa:100195338"/>
<dbReference type="CTD" id="110281"/>
<dbReference type="Proteomes" id="UP000087266">
    <property type="component" value="Chromosome ssa06"/>
</dbReference>
<dbReference type="Bgee" id="ENSSSAG00000047269">
    <property type="expression patterns" value="Expressed in notochord and 24 other cell types or tissues"/>
</dbReference>
<dbReference type="GO" id="GO:0005741">
    <property type="term" value="C:mitochondrial outer membrane"/>
    <property type="evidence" value="ECO:0000250"/>
    <property type="project" value="UniProtKB"/>
</dbReference>
<dbReference type="GO" id="GO:0005886">
    <property type="term" value="C:plasma membrane"/>
    <property type="evidence" value="ECO:0000250"/>
    <property type="project" value="UniProtKB"/>
</dbReference>
<dbReference type="GO" id="GO:0015297">
    <property type="term" value="F:antiporter activity"/>
    <property type="evidence" value="ECO:0007669"/>
    <property type="project" value="UniProtKB-KW"/>
</dbReference>
<dbReference type="GO" id="GO:0015220">
    <property type="term" value="F:choline transmembrane transporter activity"/>
    <property type="evidence" value="ECO:0000250"/>
    <property type="project" value="UniProtKB"/>
</dbReference>
<dbReference type="GO" id="GO:0034228">
    <property type="term" value="F:ethanolamine transmembrane transporter activity"/>
    <property type="evidence" value="ECO:0000250"/>
    <property type="project" value="UniProtKB"/>
</dbReference>
<dbReference type="GO" id="GO:0015871">
    <property type="term" value="P:choline transport"/>
    <property type="evidence" value="ECO:0000250"/>
    <property type="project" value="UniProtKB"/>
</dbReference>
<dbReference type="GO" id="GO:0034229">
    <property type="term" value="P:ethanolamine transport"/>
    <property type="evidence" value="ECO:0000250"/>
    <property type="project" value="UniProtKB"/>
</dbReference>
<dbReference type="InterPro" id="IPR007603">
    <property type="entry name" value="Choline_transptr-like"/>
</dbReference>
<dbReference type="PANTHER" id="PTHR12385">
    <property type="entry name" value="CHOLINE TRANSPORTER-LIKE (SLC FAMILY 44)"/>
    <property type="match status" value="1"/>
</dbReference>
<dbReference type="PANTHER" id="PTHR12385:SF34">
    <property type="entry name" value="CHOLINE TRANSPORTER-LIKE PROTEIN 2"/>
    <property type="match status" value="1"/>
</dbReference>
<dbReference type="Pfam" id="PF04515">
    <property type="entry name" value="Choline_transpo"/>
    <property type="match status" value="1"/>
</dbReference>
<sequence>MMELEGEKPNYGEPRKYDPTFKGPIYNRGCTDIVCCIFFIICILGYVAVGILAWSQGDPRKVIYPTDSRGQFCGQAGTPLETKPLLFYFNIMKCASPMVLLEFQCPTTQMCVEKCPDKFMTLLKAYANKEDFKYYKNFCKEGLEGLTVTQILSSGLCPAMLTPSKPFTRRCFPALDQKKGGEITVGNNSKFDDGEGNIRDAKDLVAGVKNATVVIEARQVVMKIFEDYTQSWYWILIGLVIAMLISLLFIVLLRFLAGIMVWVMIVMVILVIGYGIFHCSMEYVSLKSEAGSNVTLKDLGFQTDFSVYLHIRQTWLAFIIILAIVEVVIILLLIFLRNRILIAIALIKEASRAIGYVMSALFYPLFTFALLSIVIAYWAVTAVFLSTSNQPIYKVFNDTACDHSRKICEPANFSTSSMKAECPDSKCLFAFYGGETVYHKYLIGLQFYNVFLFFWCANFVTALGQMTLAGAFASYYWALVKPDDMPAFPIFSSLGRSLRYHTGSLAFGSLILSIIQIIRVLLEYIDHKLQGTQNKCTKFLLCCLKCCFWCLEKFIKFINRNAYIMVAIYGKNFCTSAKDAFFLLMRNMIRVAVLDKVTDFLLFLGKLLIVGLVGIFAFFFFSGRVKAFENTAPNLHYYWVPILTVVVGSYLIAHGFFSVYAMCVDTLFLCFLEDLERNDGSAERPYLMSDRLLKVLNKKNKPEPAE</sequence>
<keyword id="KW-0050">Antiport</keyword>
<keyword id="KW-1003">Cell membrane</keyword>
<keyword id="KW-0325">Glycoprotein</keyword>
<keyword id="KW-0472">Membrane</keyword>
<keyword id="KW-0496">Mitochondrion</keyword>
<keyword id="KW-1000">Mitochondrion outer membrane</keyword>
<keyword id="KW-0597">Phosphoprotein</keyword>
<keyword id="KW-1185">Reference proteome</keyword>
<keyword id="KW-0812">Transmembrane</keyword>
<keyword id="KW-1133">Transmembrane helix</keyword>
<keyword id="KW-0813">Transport</keyword>